<reference key="1">
    <citation type="journal article" date="2003" name="Lancet">
        <title>Genome sequence of Vibrio parahaemolyticus: a pathogenic mechanism distinct from that of V. cholerae.</title>
        <authorList>
            <person name="Makino K."/>
            <person name="Oshima K."/>
            <person name="Kurokawa K."/>
            <person name="Yokoyama K."/>
            <person name="Uda T."/>
            <person name="Tagomori K."/>
            <person name="Iijima Y."/>
            <person name="Najima M."/>
            <person name="Nakano M."/>
            <person name="Yamashita A."/>
            <person name="Kubota Y."/>
            <person name="Kimura S."/>
            <person name="Yasunaga T."/>
            <person name="Honda T."/>
            <person name="Shinagawa H."/>
            <person name="Hattori M."/>
            <person name="Iida T."/>
        </authorList>
    </citation>
    <scope>NUCLEOTIDE SEQUENCE [LARGE SCALE GENOMIC DNA]</scope>
    <source>
        <strain>RIMD 2210633</strain>
    </source>
</reference>
<dbReference type="EMBL" id="BA000031">
    <property type="protein sequence ID" value="BAC60809.1"/>
    <property type="molecule type" value="Genomic_DNA"/>
</dbReference>
<dbReference type="RefSeq" id="NP_798925.1">
    <property type="nucleotide sequence ID" value="NC_004603.1"/>
</dbReference>
<dbReference type="RefSeq" id="WP_004415691.1">
    <property type="nucleotide sequence ID" value="NC_004603.1"/>
</dbReference>
<dbReference type="SMR" id="Q87LR5"/>
<dbReference type="GeneID" id="97173036"/>
<dbReference type="KEGG" id="vpa:VP2546"/>
<dbReference type="PATRIC" id="fig|223926.6.peg.2444"/>
<dbReference type="eggNOG" id="COG1551">
    <property type="taxonomic scope" value="Bacteria"/>
</dbReference>
<dbReference type="HOGENOM" id="CLU_164837_2_1_6"/>
<dbReference type="PRO" id="PR:Q87LR5"/>
<dbReference type="Proteomes" id="UP000002493">
    <property type="component" value="Chromosome 1"/>
</dbReference>
<dbReference type="GO" id="GO:0005829">
    <property type="term" value="C:cytosol"/>
    <property type="evidence" value="ECO:0007669"/>
    <property type="project" value="TreeGrafter"/>
</dbReference>
<dbReference type="GO" id="GO:0048027">
    <property type="term" value="F:mRNA 5'-UTR binding"/>
    <property type="evidence" value="ECO:0007669"/>
    <property type="project" value="UniProtKB-UniRule"/>
</dbReference>
<dbReference type="GO" id="GO:0006402">
    <property type="term" value="P:mRNA catabolic process"/>
    <property type="evidence" value="ECO:0007669"/>
    <property type="project" value="InterPro"/>
</dbReference>
<dbReference type="GO" id="GO:0045947">
    <property type="term" value="P:negative regulation of translational initiation"/>
    <property type="evidence" value="ECO:0007669"/>
    <property type="project" value="UniProtKB-UniRule"/>
</dbReference>
<dbReference type="GO" id="GO:0045948">
    <property type="term" value="P:positive regulation of translational initiation"/>
    <property type="evidence" value="ECO:0007669"/>
    <property type="project" value="UniProtKB-UniRule"/>
</dbReference>
<dbReference type="GO" id="GO:0006109">
    <property type="term" value="P:regulation of carbohydrate metabolic process"/>
    <property type="evidence" value="ECO:0007669"/>
    <property type="project" value="UniProtKB-UniRule"/>
</dbReference>
<dbReference type="FunFam" id="2.60.40.4380:FF:000001">
    <property type="entry name" value="Translational regulator CsrA"/>
    <property type="match status" value="1"/>
</dbReference>
<dbReference type="Gene3D" id="2.60.40.4380">
    <property type="entry name" value="Translational regulator CsrA"/>
    <property type="match status" value="1"/>
</dbReference>
<dbReference type="HAMAP" id="MF_00167">
    <property type="entry name" value="CsrA"/>
    <property type="match status" value="1"/>
</dbReference>
<dbReference type="InterPro" id="IPR003751">
    <property type="entry name" value="CsrA"/>
</dbReference>
<dbReference type="InterPro" id="IPR036107">
    <property type="entry name" value="CsrA_sf"/>
</dbReference>
<dbReference type="NCBIfam" id="TIGR00202">
    <property type="entry name" value="csrA"/>
    <property type="match status" value="1"/>
</dbReference>
<dbReference type="NCBIfam" id="NF002469">
    <property type="entry name" value="PRK01712.1"/>
    <property type="match status" value="1"/>
</dbReference>
<dbReference type="PANTHER" id="PTHR34984">
    <property type="entry name" value="CARBON STORAGE REGULATOR"/>
    <property type="match status" value="1"/>
</dbReference>
<dbReference type="PANTHER" id="PTHR34984:SF1">
    <property type="entry name" value="CARBON STORAGE REGULATOR"/>
    <property type="match status" value="1"/>
</dbReference>
<dbReference type="Pfam" id="PF02599">
    <property type="entry name" value="CsrA"/>
    <property type="match status" value="1"/>
</dbReference>
<dbReference type="SUPFAM" id="SSF117130">
    <property type="entry name" value="CsrA-like"/>
    <property type="match status" value="1"/>
</dbReference>
<keyword id="KW-0010">Activator</keyword>
<keyword id="KW-0963">Cytoplasm</keyword>
<keyword id="KW-0678">Repressor</keyword>
<keyword id="KW-0694">RNA-binding</keyword>
<keyword id="KW-0810">Translation regulation</keyword>
<feature type="chain" id="PRO_0000177096" description="Translational regulator CsrA">
    <location>
        <begin position="1"/>
        <end position="65"/>
    </location>
</feature>
<organism>
    <name type="scientific">Vibrio parahaemolyticus serotype O3:K6 (strain RIMD 2210633)</name>
    <dbReference type="NCBI Taxonomy" id="223926"/>
    <lineage>
        <taxon>Bacteria</taxon>
        <taxon>Pseudomonadati</taxon>
        <taxon>Pseudomonadota</taxon>
        <taxon>Gammaproteobacteria</taxon>
        <taxon>Vibrionales</taxon>
        <taxon>Vibrionaceae</taxon>
        <taxon>Vibrio</taxon>
    </lineage>
</organism>
<comment type="function">
    <text evidence="1">A key translational regulator that binds mRNA to regulate translation initiation and/or mRNA stability. Mediates global changes in gene expression, shifting from rapid growth to stress survival by linking envelope stress, the stringent response and the catabolite repression systems. Usually binds in the 5'-UTR; binding at or near the Shine-Dalgarno sequence prevents ribosome-binding, repressing translation, binding elsewhere in the 5'-UTR can activate translation and/or stabilize the mRNA. Its function is antagonized by small RNA(s).</text>
</comment>
<comment type="subunit">
    <text evidence="1">Homodimer; the beta-strands of each monomer intercalate to form a hydrophobic core, while the alpha-helices form wings that extend away from the core.</text>
</comment>
<comment type="subcellular location">
    <subcellularLocation>
        <location evidence="1">Cytoplasm</location>
    </subcellularLocation>
</comment>
<comment type="similarity">
    <text evidence="1">Belongs to the CsrA/RsmA family.</text>
</comment>
<sequence>MLILTRRVGETLMIGDEVTVTVLGVKGNQVRIGVNAPKEVSVHREEIYMRIQAEKGNGNVASGNY</sequence>
<name>CSRA_VIBPA</name>
<evidence type="ECO:0000255" key="1">
    <source>
        <dbReference type="HAMAP-Rule" id="MF_00167"/>
    </source>
</evidence>
<accession>Q87LR5</accession>
<proteinExistence type="inferred from homology"/>
<protein>
    <recommendedName>
        <fullName evidence="1">Translational regulator CsrA</fullName>
    </recommendedName>
    <alternativeName>
        <fullName evidence="1">Carbon storage regulator</fullName>
    </alternativeName>
</protein>
<gene>
    <name evidence="1" type="primary">csrA</name>
    <name type="ordered locus">VP2546</name>
</gene>